<gene>
    <name evidence="1" type="primary">tig</name>
    <name type="ordered locus">A1G_07160</name>
</gene>
<name>TIG_RICRS</name>
<comment type="function">
    <text evidence="1">Involved in protein export. Acts as a chaperone by maintaining the newly synthesized protein in an open conformation. Functions as a peptidyl-prolyl cis-trans isomerase.</text>
</comment>
<comment type="catalytic activity">
    <reaction evidence="1">
        <text>[protein]-peptidylproline (omega=180) = [protein]-peptidylproline (omega=0)</text>
        <dbReference type="Rhea" id="RHEA:16237"/>
        <dbReference type="Rhea" id="RHEA-COMP:10747"/>
        <dbReference type="Rhea" id="RHEA-COMP:10748"/>
        <dbReference type="ChEBI" id="CHEBI:83833"/>
        <dbReference type="ChEBI" id="CHEBI:83834"/>
        <dbReference type="EC" id="5.2.1.8"/>
    </reaction>
</comment>
<comment type="subcellular location">
    <subcellularLocation>
        <location>Cytoplasm</location>
    </subcellularLocation>
    <text evidence="1">About half TF is bound to the ribosome near the polypeptide exit tunnel while the other half is free in the cytoplasm.</text>
</comment>
<comment type="domain">
    <text evidence="1">Consists of 3 domains; the N-terminus binds the ribosome, the middle domain has PPIase activity, while the C-terminus has intrinsic chaperone activity on its own.</text>
</comment>
<comment type="similarity">
    <text evidence="1">Belongs to the FKBP-type PPIase family. Tig subfamily.</text>
</comment>
<sequence length="445" mass="50991">MGITVLKNEGLDFHARISTPLSEIDDDIQKELLDLTKKVKIPGFRAGKVPVSIVKKKYGTSVRNDIIERRINHSVNHIIKEHNLNIIGRPKIEELQNESDKALEFTVKIELLPKITIPDLKKISLDRPKLEVNSKDVEEQLEKLAALTKNYTKESKAKIKDGDQVTIDAIGYIKEKTFEDGKLNDFKVIIGSNALIPGFEKQLIGSKTGSKVDVNVTFPENYHAKDLAGKDARFVVQIKAVHTAEPTVIDDEFAKKFQSNSLEELRTHFTKQIENESEEAINTIMKMNLFDKLEKLLDFDVPESLLEQEKNILKSGTDKNEQDESLLKDKSSKEITAYYNKLALRRVRIGLLLAEYAKSKNLQLEPDDLRKVIMQQARNFPGQENMIFDFYKNNPRAIEGLKGPALEDKAVQYIFNHEIKLKEKKYTKEELEKYLEAEEQRITLI</sequence>
<reference key="1">
    <citation type="submission" date="2007-09" db="EMBL/GenBank/DDBJ databases">
        <title>Complete genome sequence of Rickettsia rickettsii.</title>
        <authorList>
            <person name="Madan A."/>
            <person name="Fahey J."/>
            <person name="Helton E."/>
            <person name="Ketteman M."/>
            <person name="Madan A."/>
            <person name="Rodrigues S."/>
            <person name="Sanchez A."/>
            <person name="Dasch G."/>
            <person name="Eremeeva M."/>
        </authorList>
    </citation>
    <scope>NUCLEOTIDE SEQUENCE [LARGE SCALE GENOMIC DNA]</scope>
    <source>
        <strain>Sheila Smith</strain>
    </source>
</reference>
<organism>
    <name type="scientific">Rickettsia rickettsii (strain Sheila Smith)</name>
    <dbReference type="NCBI Taxonomy" id="392021"/>
    <lineage>
        <taxon>Bacteria</taxon>
        <taxon>Pseudomonadati</taxon>
        <taxon>Pseudomonadota</taxon>
        <taxon>Alphaproteobacteria</taxon>
        <taxon>Rickettsiales</taxon>
        <taxon>Rickettsiaceae</taxon>
        <taxon>Rickettsieae</taxon>
        <taxon>Rickettsia</taxon>
        <taxon>spotted fever group</taxon>
    </lineage>
</organism>
<feature type="chain" id="PRO_1000022747" description="Trigger factor">
    <location>
        <begin position="1"/>
        <end position="445"/>
    </location>
</feature>
<feature type="domain" description="PPIase FKBP-type" evidence="1">
    <location>
        <begin position="162"/>
        <end position="247"/>
    </location>
</feature>
<proteinExistence type="inferred from homology"/>
<accession>A8GTZ8</accession>
<keyword id="KW-0131">Cell cycle</keyword>
<keyword id="KW-0132">Cell division</keyword>
<keyword id="KW-0143">Chaperone</keyword>
<keyword id="KW-0963">Cytoplasm</keyword>
<keyword id="KW-0413">Isomerase</keyword>
<keyword id="KW-0697">Rotamase</keyword>
<evidence type="ECO:0000255" key="1">
    <source>
        <dbReference type="HAMAP-Rule" id="MF_00303"/>
    </source>
</evidence>
<protein>
    <recommendedName>
        <fullName evidence="1">Trigger factor</fullName>
        <shortName evidence="1">TF</shortName>
        <ecNumber evidence="1">5.2.1.8</ecNumber>
    </recommendedName>
    <alternativeName>
        <fullName evidence="1">PPIase</fullName>
    </alternativeName>
</protein>
<dbReference type="EC" id="5.2.1.8" evidence="1"/>
<dbReference type="EMBL" id="CP000848">
    <property type="protein sequence ID" value="ABV76873.1"/>
    <property type="molecule type" value="Genomic_DNA"/>
</dbReference>
<dbReference type="RefSeq" id="WP_012151412.1">
    <property type="nucleotide sequence ID" value="NZ_CP121767.1"/>
</dbReference>
<dbReference type="SMR" id="A8GTZ8"/>
<dbReference type="GeneID" id="79937905"/>
<dbReference type="KEGG" id="rri:A1G_07160"/>
<dbReference type="HOGENOM" id="CLU_033058_2_2_5"/>
<dbReference type="Proteomes" id="UP000006832">
    <property type="component" value="Chromosome"/>
</dbReference>
<dbReference type="GO" id="GO:0005737">
    <property type="term" value="C:cytoplasm"/>
    <property type="evidence" value="ECO:0007669"/>
    <property type="project" value="UniProtKB-SubCell"/>
</dbReference>
<dbReference type="GO" id="GO:0003755">
    <property type="term" value="F:peptidyl-prolyl cis-trans isomerase activity"/>
    <property type="evidence" value="ECO:0007669"/>
    <property type="project" value="UniProtKB-UniRule"/>
</dbReference>
<dbReference type="GO" id="GO:0044183">
    <property type="term" value="F:protein folding chaperone"/>
    <property type="evidence" value="ECO:0007669"/>
    <property type="project" value="TreeGrafter"/>
</dbReference>
<dbReference type="GO" id="GO:0043022">
    <property type="term" value="F:ribosome binding"/>
    <property type="evidence" value="ECO:0007669"/>
    <property type="project" value="TreeGrafter"/>
</dbReference>
<dbReference type="GO" id="GO:0051083">
    <property type="term" value="P:'de novo' cotranslational protein folding"/>
    <property type="evidence" value="ECO:0007669"/>
    <property type="project" value="TreeGrafter"/>
</dbReference>
<dbReference type="GO" id="GO:0051301">
    <property type="term" value="P:cell division"/>
    <property type="evidence" value="ECO:0007669"/>
    <property type="project" value="UniProtKB-KW"/>
</dbReference>
<dbReference type="GO" id="GO:0061077">
    <property type="term" value="P:chaperone-mediated protein folding"/>
    <property type="evidence" value="ECO:0007669"/>
    <property type="project" value="TreeGrafter"/>
</dbReference>
<dbReference type="GO" id="GO:0015031">
    <property type="term" value="P:protein transport"/>
    <property type="evidence" value="ECO:0007669"/>
    <property type="project" value="UniProtKB-UniRule"/>
</dbReference>
<dbReference type="GO" id="GO:0043335">
    <property type="term" value="P:protein unfolding"/>
    <property type="evidence" value="ECO:0007669"/>
    <property type="project" value="TreeGrafter"/>
</dbReference>
<dbReference type="FunFam" id="3.10.50.40:FF:000001">
    <property type="entry name" value="Trigger factor"/>
    <property type="match status" value="1"/>
</dbReference>
<dbReference type="Gene3D" id="3.10.50.40">
    <property type="match status" value="1"/>
</dbReference>
<dbReference type="Gene3D" id="3.30.70.1050">
    <property type="entry name" value="Trigger factor ribosome-binding domain"/>
    <property type="match status" value="1"/>
</dbReference>
<dbReference type="Gene3D" id="1.10.3120.10">
    <property type="entry name" value="Trigger factor, C-terminal domain"/>
    <property type="match status" value="1"/>
</dbReference>
<dbReference type="HAMAP" id="MF_00303">
    <property type="entry name" value="Trigger_factor_Tig"/>
    <property type="match status" value="1"/>
</dbReference>
<dbReference type="InterPro" id="IPR046357">
    <property type="entry name" value="PPIase_dom_sf"/>
</dbReference>
<dbReference type="InterPro" id="IPR001179">
    <property type="entry name" value="PPIase_FKBP_dom"/>
</dbReference>
<dbReference type="InterPro" id="IPR005215">
    <property type="entry name" value="Trig_fac"/>
</dbReference>
<dbReference type="InterPro" id="IPR008880">
    <property type="entry name" value="Trigger_fac_C"/>
</dbReference>
<dbReference type="InterPro" id="IPR037041">
    <property type="entry name" value="Trigger_fac_C_sf"/>
</dbReference>
<dbReference type="InterPro" id="IPR008881">
    <property type="entry name" value="Trigger_fac_ribosome-bd_bac"/>
</dbReference>
<dbReference type="InterPro" id="IPR036611">
    <property type="entry name" value="Trigger_fac_ribosome-bd_sf"/>
</dbReference>
<dbReference type="InterPro" id="IPR027304">
    <property type="entry name" value="Trigger_fact/SurA_dom_sf"/>
</dbReference>
<dbReference type="NCBIfam" id="TIGR00115">
    <property type="entry name" value="tig"/>
    <property type="match status" value="1"/>
</dbReference>
<dbReference type="PANTHER" id="PTHR30560">
    <property type="entry name" value="TRIGGER FACTOR CHAPERONE AND PEPTIDYL-PROLYL CIS/TRANS ISOMERASE"/>
    <property type="match status" value="1"/>
</dbReference>
<dbReference type="PANTHER" id="PTHR30560:SF3">
    <property type="entry name" value="TRIGGER FACTOR-LIKE PROTEIN TIG, CHLOROPLASTIC"/>
    <property type="match status" value="1"/>
</dbReference>
<dbReference type="Pfam" id="PF00254">
    <property type="entry name" value="FKBP_C"/>
    <property type="match status" value="1"/>
</dbReference>
<dbReference type="Pfam" id="PF05698">
    <property type="entry name" value="Trigger_C"/>
    <property type="match status" value="1"/>
</dbReference>
<dbReference type="Pfam" id="PF05697">
    <property type="entry name" value="Trigger_N"/>
    <property type="match status" value="1"/>
</dbReference>
<dbReference type="PIRSF" id="PIRSF003095">
    <property type="entry name" value="Trigger_factor"/>
    <property type="match status" value="1"/>
</dbReference>
<dbReference type="SUPFAM" id="SSF54534">
    <property type="entry name" value="FKBP-like"/>
    <property type="match status" value="1"/>
</dbReference>
<dbReference type="SUPFAM" id="SSF109998">
    <property type="entry name" value="Triger factor/SurA peptide-binding domain-like"/>
    <property type="match status" value="1"/>
</dbReference>
<dbReference type="SUPFAM" id="SSF102735">
    <property type="entry name" value="Trigger factor ribosome-binding domain"/>
    <property type="match status" value="1"/>
</dbReference>
<dbReference type="PROSITE" id="PS50059">
    <property type="entry name" value="FKBP_PPIASE"/>
    <property type="match status" value="1"/>
</dbReference>